<name>LIX1L_MOUSE</name>
<gene>
    <name type="primary">Lix1l</name>
</gene>
<keyword id="KW-1185">Reference proteome</keyword>
<protein>
    <recommendedName>
        <fullName>LIX1-like protein</fullName>
    </recommendedName>
</protein>
<evidence type="ECO:0000256" key="1">
    <source>
        <dbReference type="SAM" id="MobiDB-lite"/>
    </source>
</evidence>
<evidence type="ECO:0000305" key="2"/>
<feature type="chain" id="PRO_0000232873" description="LIX1-like protein">
    <location>
        <begin position="1"/>
        <end position="337"/>
    </location>
</feature>
<feature type="region of interest" description="Disordered" evidence="1">
    <location>
        <begin position="1"/>
        <end position="55"/>
    </location>
</feature>
<feature type="compositionally biased region" description="Low complexity" evidence="1">
    <location>
        <begin position="26"/>
        <end position="38"/>
    </location>
</feature>
<feature type="compositionally biased region" description="Pro residues" evidence="1">
    <location>
        <begin position="39"/>
        <end position="55"/>
    </location>
</feature>
<sequence>METMRAQRLQPGVGVGGRGTLRALRPGVTGAPTSAATPPVGPPPAPPPPAPPLPPLLLAGAPGLPLPPGAAGSPAVLREAVEAVVRSFAKHTQGYGRVNVVEALQEFWQMKQSRGADLKNGALVVYEMVPSNSPPYVCYVTLPGGSCFGSFQFCPTKAEARRSAAKIALMNSVFNEHPSRRITDEFIEKSVSEALASFNGNREEADNPNTGIGAFRFMLESNKGKSMLEFQELMTVFQLLHWNGSLKAMRERQCSRQEVLAHYSHRALDDDIRHQMALDWVSREQSVPGALSRELASTERELDEARLAGKELRFHKEKKDILMLAAGQLGNMHSSSC</sequence>
<reference key="1">
    <citation type="journal article" date="2005" name="Science">
        <title>The transcriptional landscape of the mammalian genome.</title>
        <authorList>
            <person name="Carninci P."/>
            <person name="Kasukawa T."/>
            <person name="Katayama S."/>
            <person name="Gough J."/>
            <person name="Frith M.C."/>
            <person name="Maeda N."/>
            <person name="Oyama R."/>
            <person name="Ravasi T."/>
            <person name="Lenhard B."/>
            <person name="Wells C."/>
            <person name="Kodzius R."/>
            <person name="Shimokawa K."/>
            <person name="Bajic V.B."/>
            <person name="Brenner S.E."/>
            <person name="Batalov S."/>
            <person name="Forrest A.R."/>
            <person name="Zavolan M."/>
            <person name="Davis M.J."/>
            <person name="Wilming L.G."/>
            <person name="Aidinis V."/>
            <person name="Allen J.E."/>
            <person name="Ambesi-Impiombato A."/>
            <person name="Apweiler R."/>
            <person name="Aturaliya R.N."/>
            <person name="Bailey T.L."/>
            <person name="Bansal M."/>
            <person name="Baxter L."/>
            <person name="Beisel K.W."/>
            <person name="Bersano T."/>
            <person name="Bono H."/>
            <person name="Chalk A.M."/>
            <person name="Chiu K.P."/>
            <person name="Choudhary V."/>
            <person name="Christoffels A."/>
            <person name="Clutterbuck D.R."/>
            <person name="Crowe M.L."/>
            <person name="Dalla E."/>
            <person name="Dalrymple B.P."/>
            <person name="de Bono B."/>
            <person name="Della Gatta G."/>
            <person name="di Bernardo D."/>
            <person name="Down T."/>
            <person name="Engstrom P."/>
            <person name="Fagiolini M."/>
            <person name="Faulkner G."/>
            <person name="Fletcher C.F."/>
            <person name="Fukushima T."/>
            <person name="Furuno M."/>
            <person name="Futaki S."/>
            <person name="Gariboldi M."/>
            <person name="Georgii-Hemming P."/>
            <person name="Gingeras T.R."/>
            <person name="Gojobori T."/>
            <person name="Green R.E."/>
            <person name="Gustincich S."/>
            <person name="Harbers M."/>
            <person name="Hayashi Y."/>
            <person name="Hensch T.K."/>
            <person name="Hirokawa N."/>
            <person name="Hill D."/>
            <person name="Huminiecki L."/>
            <person name="Iacono M."/>
            <person name="Ikeo K."/>
            <person name="Iwama A."/>
            <person name="Ishikawa T."/>
            <person name="Jakt M."/>
            <person name="Kanapin A."/>
            <person name="Katoh M."/>
            <person name="Kawasawa Y."/>
            <person name="Kelso J."/>
            <person name="Kitamura H."/>
            <person name="Kitano H."/>
            <person name="Kollias G."/>
            <person name="Krishnan S.P."/>
            <person name="Kruger A."/>
            <person name="Kummerfeld S.K."/>
            <person name="Kurochkin I.V."/>
            <person name="Lareau L.F."/>
            <person name="Lazarevic D."/>
            <person name="Lipovich L."/>
            <person name="Liu J."/>
            <person name="Liuni S."/>
            <person name="McWilliam S."/>
            <person name="Madan Babu M."/>
            <person name="Madera M."/>
            <person name="Marchionni L."/>
            <person name="Matsuda H."/>
            <person name="Matsuzawa S."/>
            <person name="Miki H."/>
            <person name="Mignone F."/>
            <person name="Miyake S."/>
            <person name="Morris K."/>
            <person name="Mottagui-Tabar S."/>
            <person name="Mulder N."/>
            <person name="Nakano N."/>
            <person name="Nakauchi H."/>
            <person name="Ng P."/>
            <person name="Nilsson R."/>
            <person name="Nishiguchi S."/>
            <person name="Nishikawa S."/>
            <person name="Nori F."/>
            <person name="Ohara O."/>
            <person name="Okazaki Y."/>
            <person name="Orlando V."/>
            <person name="Pang K.C."/>
            <person name="Pavan W.J."/>
            <person name="Pavesi G."/>
            <person name="Pesole G."/>
            <person name="Petrovsky N."/>
            <person name="Piazza S."/>
            <person name="Reed J."/>
            <person name="Reid J.F."/>
            <person name="Ring B.Z."/>
            <person name="Ringwald M."/>
            <person name="Rost B."/>
            <person name="Ruan Y."/>
            <person name="Salzberg S.L."/>
            <person name="Sandelin A."/>
            <person name="Schneider C."/>
            <person name="Schoenbach C."/>
            <person name="Sekiguchi K."/>
            <person name="Semple C.A."/>
            <person name="Seno S."/>
            <person name="Sessa L."/>
            <person name="Sheng Y."/>
            <person name="Shibata Y."/>
            <person name="Shimada H."/>
            <person name="Shimada K."/>
            <person name="Silva D."/>
            <person name="Sinclair B."/>
            <person name="Sperling S."/>
            <person name="Stupka E."/>
            <person name="Sugiura K."/>
            <person name="Sultana R."/>
            <person name="Takenaka Y."/>
            <person name="Taki K."/>
            <person name="Tammoja K."/>
            <person name="Tan S.L."/>
            <person name="Tang S."/>
            <person name="Taylor M.S."/>
            <person name="Tegner J."/>
            <person name="Teichmann S.A."/>
            <person name="Ueda H.R."/>
            <person name="van Nimwegen E."/>
            <person name="Verardo R."/>
            <person name="Wei C.L."/>
            <person name="Yagi K."/>
            <person name="Yamanishi H."/>
            <person name="Zabarovsky E."/>
            <person name="Zhu S."/>
            <person name="Zimmer A."/>
            <person name="Hide W."/>
            <person name="Bult C."/>
            <person name="Grimmond S.M."/>
            <person name="Teasdale R.D."/>
            <person name="Liu E.T."/>
            <person name="Brusic V."/>
            <person name="Quackenbush J."/>
            <person name="Wahlestedt C."/>
            <person name="Mattick J.S."/>
            <person name="Hume D.A."/>
            <person name="Kai C."/>
            <person name="Sasaki D."/>
            <person name="Tomaru Y."/>
            <person name="Fukuda S."/>
            <person name="Kanamori-Katayama M."/>
            <person name="Suzuki M."/>
            <person name="Aoki J."/>
            <person name="Arakawa T."/>
            <person name="Iida J."/>
            <person name="Imamura K."/>
            <person name="Itoh M."/>
            <person name="Kato T."/>
            <person name="Kawaji H."/>
            <person name="Kawagashira N."/>
            <person name="Kawashima T."/>
            <person name="Kojima M."/>
            <person name="Kondo S."/>
            <person name="Konno H."/>
            <person name="Nakano K."/>
            <person name="Ninomiya N."/>
            <person name="Nishio T."/>
            <person name="Okada M."/>
            <person name="Plessy C."/>
            <person name="Shibata K."/>
            <person name="Shiraki T."/>
            <person name="Suzuki S."/>
            <person name="Tagami M."/>
            <person name="Waki K."/>
            <person name="Watahiki A."/>
            <person name="Okamura-Oho Y."/>
            <person name="Suzuki H."/>
            <person name="Kawai J."/>
            <person name="Hayashizaki Y."/>
        </authorList>
    </citation>
    <scope>NUCLEOTIDE SEQUENCE [LARGE SCALE MRNA]</scope>
    <source>
        <strain>C57BL/6J</strain>
        <tissue>Spinal ganglion</tissue>
    </source>
</reference>
<dbReference type="EMBL" id="AK051276">
    <property type="protein sequence ID" value="BAC34588.1"/>
    <property type="status" value="ALT_INIT"/>
    <property type="molecule type" value="mRNA"/>
</dbReference>
<dbReference type="CCDS" id="CCDS51004.1"/>
<dbReference type="RefSeq" id="NP_001156642.1">
    <property type="nucleotide sequence ID" value="NM_001163170.1"/>
</dbReference>
<dbReference type="FunCoup" id="Q8BQ89">
    <property type="interactions" value="716"/>
</dbReference>
<dbReference type="STRING" id="10090.ENSMUSP00000057623"/>
<dbReference type="GlyGen" id="Q8BQ89">
    <property type="glycosylation" value="1 site"/>
</dbReference>
<dbReference type="iPTMnet" id="Q8BQ89"/>
<dbReference type="PhosphoSitePlus" id="Q8BQ89"/>
<dbReference type="jPOST" id="Q8BQ89"/>
<dbReference type="PaxDb" id="10090-ENSMUSP00000057623"/>
<dbReference type="ProteomicsDB" id="292100"/>
<dbReference type="Pumba" id="Q8BQ89"/>
<dbReference type="GeneID" id="280411"/>
<dbReference type="KEGG" id="mmu:280411"/>
<dbReference type="AGR" id="MGI:3036267"/>
<dbReference type="CTD" id="128077"/>
<dbReference type="MGI" id="MGI:3036267">
    <property type="gene designation" value="Lix1l"/>
</dbReference>
<dbReference type="eggNOG" id="ENOG502QR91">
    <property type="taxonomic scope" value="Eukaryota"/>
</dbReference>
<dbReference type="InParanoid" id="Q8BQ89"/>
<dbReference type="OrthoDB" id="6250996at2759"/>
<dbReference type="PhylomeDB" id="Q8BQ89"/>
<dbReference type="BioGRID-ORCS" id="280411">
    <property type="hits" value="4 hits in 77 CRISPR screens"/>
</dbReference>
<dbReference type="ChiTaRS" id="Lix1l">
    <property type="organism name" value="mouse"/>
</dbReference>
<dbReference type="PRO" id="PR:Q8BQ89"/>
<dbReference type="Proteomes" id="UP000000589">
    <property type="component" value="Unplaced"/>
</dbReference>
<dbReference type="RNAct" id="Q8BQ89">
    <property type="molecule type" value="protein"/>
</dbReference>
<dbReference type="GO" id="GO:0032991">
    <property type="term" value="C:protein-containing complex"/>
    <property type="evidence" value="ECO:0000247"/>
    <property type="project" value="MGI"/>
</dbReference>
<dbReference type="GO" id="GO:0030036">
    <property type="term" value="P:actin cytoskeleton organization"/>
    <property type="evidence" value="ECO:0000315"/>
    <property type="project" value="MGI"/>
</dbReference>
<dbReference type="GO" id="GO:0010467">
    <property type="term" value="P:gene expression"/>
    <property type="evidence" value="ECO:0000315"/>
    <property type="project" value="MGI"/>
</dbReference>
<dbReference type="GO" id="GO:0003174">
    <property type="term" value="P:mitral valve development"/>
    <property type="evidence" value="ECO:0000316"/>
    <property type="project" value="MGI"/>
</dbReference>
<dbReference type="CDD" id="cd00048">
    <property type="entry name" value="DSRM_SF"/>
    <property type="match status" value="1"/>
</dbReference>
<dbReference type="InterPro" id="IPR051436">
    <property type="entry name" value="Autophagy-related_EPG5"/>
</dbReference>
<dbReference type="InterPro" id="IPR029270">
    <property type="entry name" value="LIX1"/>
</dbReference>
<dbReference type="PANTHER" id="PTHR31139">
    <property type="entry name" value="ECTOPIC P GRANULES PROTEIN 5 HOMOLOG"/>
    <property type="match status" value="1"/>
</dbReference>
<dbReference type="PANTHER" id="PTHR31139:SF6">
    <property type="entry name" value="PROTEIN LIMB EXPRESSION 1 HOMOLOG"/>
    <property type="match status" value="1"/>
</dbReference>
<dbReference type="Pfam" id="PF14954">
    <property type="entry name" value="LIX1"/>
    <property type="match status" value="1"/>
</dbReference>
<dbReference type="SUPFAM" id="SSF54768">
    <property type="entry name" value="dsRNA-binding domain-like"/>
    <property type="match status" value="1"/>
</dbReference>
<accession>Q8BQ89</accession>
<organism>
    <name type="scientific">Mus musculus</name>
    <name type="common">Mouse</name>
    <dbReference type="NCBI Taxonomy" id="10090"/>
    <lineage>
        <taxon>Eukaryota</taxon>
        <taxon>Metazoa</taxon>
        <taxon>Chordata</taxon>
        <taxon>Craniata</taxon>
        <taxon>Vertebrata</taxon>
        <taxon>Euteleostomi</taxon>
        <taxon>Mammalia</taxon>
        <taxon>Eutheria</taxon>
        <taxon>Euarchontoglires</taxon>
        <taxon>Glires</taxon>
        <taxon>Rodentia</taxon>
        <taxon>Myomorpha</taxon>
        <taxon>Muroidea</taxon>
        <taxon>Muridae</taxon>
        <taxon>Murinae</taxon>
        <taxon>Mus</taxon>
        <taxon>Mus</taxon>
    </lineage>
</organism>
<comment type="similarity">
    <text evidence="2">Belongs to the LIX1 family.</text>
</comment>
<comment type="sequence caution" evidence="2">
    <conflict type="erroneous initiation">
        <sequence resource="EMBL-CDS" id="BAC34588"/>
    </conflict>
</comment>
<proteinExistence type="evidence at transcript level"/>